<gene>
    <name evidence="1" type="primary">ileS</name>
    <name type="ordered locus">PSPPH_0721</name>
</gene>
<name>SYI_PSE14</name>
<protein>
    <recommendedName>
        <fullName evidence="1">Isoleucine--tRNA ligase</fullName>
        <ecNumber evidence="1">6.1.1.5</ecNumber>
    </recommendedName>
    <alternativeName>
        <fullName evidence="1">Isoleucyl-tRNA synthetase</fullName>
        <shortName evidence="1">IleRS</shortName>
    </alternativeName>
</protein>
<comment type="function">
    <text evidence="1">Catalyzes the attachment of isoleucine to tRNA(Ile). As IleRS can inadvertently accommodate and process structurally similar amino acids such as valine, to avoid such errors it has two additional distinct tRNA(Ile)-dependent editing activities. One activity is designated as 'pretransfer' editing and involves the hydrolysis of activated Val-AMP. The other activity is designated 'posttransfer' editing and involves deacylation of mischarged Val-tRNA(Ile).</text>
</comment>
<comment type="catalytic activity">
    <reaction evidence="1">
        <text>tRNA(Ile) + L-isoleucine + ATP = L-isoleucyl-tRNA(Ile) + AMP + diphosphate</text>
        <dbReference type="Rhea" id="RHEA:11060"/>
        <dbReference type="Rhea" id="RHEA-COMP:9666"/>
        <dbReference type="Rhea" id="RHEA-COMP:9695"/>
        <dbReference type="ChEBI" id="CHEBI:30616"/>
        <dbReference type="ChEBI" id="CHEBI:33019"/>
        <dbReference type="ChEBI" id="CHEBI:58045"/>
        <dbReference type="ChEBI" id="CHEBI:78442"/>
        <dbReference type="ChEBI" id="CHEBI:78528"/>
        <dbReference type="ChEBI" id="CHEBI:456215"/>
        <dbReference type="EC" id="6.1.1.5"/>
    </reaction>
</comment>
<comment type="cofactor">
    <cofactor evidence="1">
        <name>Zn(2+)</name>
        <dbReference type="ChEBI" id="CHEBI:29105"/>
    </cofactor>
    <text evidence="1">Binds 1 zinc ion per subunit.</text>
</comment>
<comment type="subunit">
    <text evidence="1">Monomer.</text>
</comment>
<comment type="subcellular location">
    <subcellularLocation>
        <location evidence="1">Cytoplasm</location>
    </subcellularLocation>
</comment>
<comment type="domain">
    <text evidence="1">IleRS has two distinct active sites: one for aminoacylation and one for editing. The misactivated valine is translocated from the active site to the editing site, which sterically excludes the correctly activated isoleucine. The single editing site contains two valyl binding pockets, one specific for each substrate (Val-AMP or Val-tRNA(Ile)).</text>
</comment>
<comment type="similarity">
    <text evidence="1">Belongs to the class-I aminoacyl-tRNA synthetase family. IleS type 1 subfamily.</text>
</comment>
<sequence>MTDYKATLNLPDTAFPMKAGLPQREPQTLQRWDSIGLYQKLREIGKDRPKFVLHDGPPYANGNIHIGHAVNKILKDMILRSKTLAGFDAPYVPGWDCHGLPIEHKVEVTHGKNLSADRTRELCRAYASEQIEGQKSEFIRLGVLGDWSNPYLTMNFANEAGEIRALAEMVKGGFVFKGLKPVNWCFDCGSALAEAEVEYQDKKSSTIDVAFLIADEAKLAAAFGLPALGKPASIVIWTTTPWTIPANQALNVHPEFEYALVDVGDKLLVLAAELVESCLARYKLEGTVIATTTGQALELINFRHPFYDRLSPVYLADYVELGAGTGIVHSSPAYGVDDFNICKQYGLSNDDIISPVQSNGVYVESLEFFGGQFIFKANQNIIDKLVEVGSLMDTETISHSYMHCWRHKSPLIYRATAQWFVGMDKQPESGETLRKRAVKAIEDTEFVPAWGQARLHSMIANRPDWCISRQRNWGVPIPFFLHKESGDLHPRTVELMEEVAQRVEKEGIEAWFKLDASELLGDEAAKYDKISDTLDVWFDSGTTHWHVLRGSHPMGHESGPRADLYLEGSDQHRGWFHSSLLTGCMLDDHAPYRELLTHGFVVDENGRKMSKSLNNVVAPQKVNDSLGADIMRLWVSATDYSGEMAVSDQILQRSADAYRRIRNTARFLLSNLSGFNPATDILPAEEMLALDRWAVDRTLLLQRELQEHYGEYRFWNVYSKIHNFCVQELGGFYLDIIKDRQYTTAADSTARRSCQTALFHISEALVRWITPILAFTADELWQFLPGERNESVMLNTWYEGLTEMPADFEMDRAYWERIMAVKTSVNKEMENLRAAKAIGGNLQAEVTLYAEDSLIADLSKLSNELRFVLITSTASVAPLVSAPADAVVTEVAGLKLKVLKSSHAKCARCWHHREDVGVNPEHPEICGRCVDNISGAGEVRHYA</sequence>
<proteinExistence type="inferred from homology"/>
<dbReference type="EC" id="6.1.1.5" evidence="1"/>
<dbReference type="EMBL" id="CP000058">
    <property type="protein sequence ID" value="AAZ37532.1"/>
    <property type="molecule type" value="Genomic_DNA"/>
</dbReference>
<dbReference type="RefSeq" id="WP_011167651.1">
    <property type="nucleotide sequence ID" value="NC_005773.3"/>
</dbReference>
<dbReference type="SMR" id="Q48NK6"/>
<dbReference type="KEGG" id="psp:PSPPH_0721"/>
<dbReference type="eggNOG" id="COG0060">
    <property type="taxonomic scope" value="Bacteria"/>
</dbReference>
<dbReference type="HOGENOM" id="CLU_001493_7_1_6"/>
<dbReference type="Proteomes" id="UP000000551">
    <property type="component" value="Chromosome"/>
</dbReference>
<dbReference type="GO" id="GO:0005829">
    <property type="term" value="C:cytosol"/>
    <property type="evidence" value="ECO:0007669"/>
    <property type="project" value="TreeGrafter"/>
</dbReference>
<dbReference type="GO" id="GO:0002161">
    <property type="term" value="F:aminoacyl-tRNA deacylase activity"/>
    <property type="evidence" value="ECO:0007669"/>
    <property type="project" value="InterPro"/>
</dbReference>
<dbReference type="GO" id="GO:0005524">
    <property type="term" value="F:ATP binding"/>
    <property type="evidence" value="ECO:0007669"/>
    <property type="project" value="UniProtKB-UniRule"/>
</dbReference>
<dbReference type="GO" id="GO:0004822">
    <property type="term" value="F:isoleucine-tRNA ligase activity"/>
    <property type="evidence" value="ECO:0007669"/>
    <property type="project" value="UniProtKB-UniRule"/>
</dbReference>
<dbReference type="GO" id="GO:0000049">
    <property type="term" value="F:tRNA binding"/>
    <property type="evidence" value="ECO:0007669"/>
    <property type="project" value="InterPro"/>
</dbReference>
<dbReference type="GO" id="GO:0008270">
    <property type="term" value="F:zinc ion binding"/>
    <property type="evidence" value="ECO:0007669"/>
    <property type="project" value="UniProtKB-UniRule"/>
</dbReference>
<dbReference type="GO" id="GO:0006428">
    <property type="term" value="P:isoleucyl-tRNA aminoacylation"/>
    <property type="evidence" value="ECO:0007669"/>
    <property type="project" value="UniProtKB-UniRule"/>
</dbReference>
<dbReference type="CDD" id="cd07960">
    <property type="entry name" value="Anticodon_Ia_Ile_BEm"/>
    <property type="match status" value="1"/>
</dbReference>
<dbReference type="FunFam" id="1.10.730.20:FF:000001">
    <property type="entry name" value="Isoleucine--tRNA ligase"/>
    <property type="match status" value="1"/>
</dbReference>
<dbReference type="FunFam" id="3.40.50.620:FF:000042">
    <property type="entry name" value="Isoleucine--tRNA ligase"/>
    <property type="match status" value="1"/>
</dbReference>
<dbReference type="FunFam" id="3.40.50.620:FF:000048">
    <property type="entry name" value="Isoleucine--tRNA ligase"/>
    <property type="match status" value="1"/>
</dbReference>
<dbReference type="Gene3D" id="1.10.730.20">
    <property type="match status" value="1"/>
</dbReference>
<dbReference type="Gene3D" id="3.40.50.620">
    <property type="entry name" value="HUPs"/>
    <property type="match status" value="2"/>
</dbReference>
<dbReference type="Gene3D" id="1.10.10.830">
    <property type="entry name" value="Ile-tRNA synthetase CP2 domain-like"/>
    <property type="match status" value="1"/>
</dbReference>
<dbReference type="HAMAP" id="MF_02002">
    <property type="entry name" value="Ile_tRNA_synth_type1"/>
    <property type="match status" value="1"/>
</dbReference>
<dbReference type="InterPro" id="IPR001412">
    <property type="entry name" value="aa-tRNA-synth_I_CS"/>
</dbReference>
<dbReference type="InterPro" id="IPR002300">
    <property type="entry name" value="aa-tRNA-synth_Ia"/>
</dbReference>
<dbReference type="InterPro" id="IPR033708">
    <property type="entry name" value="Anticodon_Ile_BEm"/>
</dbReference>
<dbReference type="InterPro" id="IPR002301">
    <property type="entry name" value="Ile-tRNA-ligase"/>
</dbReference>
<dbReference type="InterPro" id="IPR023585">
    <property type="entry name" value="Ile-tRNA-ligase_type1"/>
</dbReference>
<dbReference type="InterPro" id="IPR050081">
    <property type="entry name" value="Ile-tRNA_ligase"/>
</dbReference>
<dbReference type="InterPro" id="IPR013155">
    <property type="entry name" value="M/V/L/I-tRNA-synth_anticd-bd"/>
</dbReference>
<dbReference type="InterPro" id="IPR014729">
    <property type="entry name" value="Rossmann-like_a/b/a_fold"/>
</dbReference>
<dbReference type="InterPro" id="IPR009080">
    <property type="entry name" value="tRNAsynth_Ia_anticodon-bd"/>
</dbReference>
<dbReference type="InterPro" id="IPR009008">
    <property type="entry name" value="Val/Leu/Ile-tRNA-synth_edit"/>
</dbReference>
<dbReference type="InterPro" id="IPR010663">
    <property type="entry name" value="Znf_FPG/IleRS"/>
</dbReference>
<dbReference type="NCBIfam" id="TIGR00392">
    <property type="entry name" value="ileS"/>
    <property type="match status" value="1"/>
</dbReference>
<dbReference type="PANTHER" id="PTHR42765:SF1">
    <property type="entry name" value="ISOLEUCINE--TRNA LIGASE, MITOCHONDRIAL"/>
    <property type="match status" value="1"/>
</dbReference>
<dbReference type="PANTHER" id="PTHR42765">
    <property type="entry name" value="SOLEUCYL-TRNA SYNTHETASE"/>
    <property type="match status" value="1"/>
</dbReference>
<dbReference type="Pfam" id="PF08264">
    <property type="entry name" value="Anticodon_1"/>
    <property type="match status" value="1"/>
</dbReference>
<dbReference type="Pfam" id="PF00133">
    <property type="entry name" value="tRNA-synt_1"/>
    <property type="match status" value="1"/>
</dbReference>
<dbReference type="Pfam" id="PF06827">
    <property type="entry name" value="zf-FPG_IleRS"/>
    <property type="match status" value="1"/>
</dbReference>
<dbReference type="PRINTS" id="PR00984">
    <property type="entry name" value="TRNASYNTHILE"/>
</dbReference>
<dbReference type="SUPFAM" id="SSF47323">
    <property type="entry name" value="Anticodon-binding domain of a subclass of class I aminoacyl-tRNA synthetases"/>
    <property type="match status" value="1"/>
</dbReference>
<dbReference type="SUPFAM" id="SSF52374">
    <property type="entry name" value="Nucleotidylyl transferase"/>
    <property type="match status" value="1"/>
</dbReference>
<dbReference type="SUPFAM" id="SSF50677">
    <property type="entry name" value="ValRS/IleRS/LeuRS editing domain"/>
    <property type="match status" value="1"/>
</dbReference>
<dbReference type="PROSITE" id="PS00178">
    <property type="entry name" value="AA_TRNA_LIGASE_I"/>
    <property type="match status" value="1"/>
</dbReference>
<feature type="chain" id="PRO_0000098448" description="Isoleucine--tRNA ligase">
    <location>
        <begin position="1"/>
        <end position="943"/>
    </location>
</feature>
<feature type="short sequence motif" description="'HIGH' region">
    <location>
        <begin position="58"/>
        <end position="68"/>
    </location>
</feature>
<feature type="short sequence motif" description="'KMSKS' region">
    <location>
        <begin position="608"/>
        <end position="612"/>
    </location>
</feature>
<feature type="binding site" evidence="1">
    <location>
        <position position="567"/>
    </location>
    <ligand>
        <name>L-isoleucyl-5'-AMP</name>
        <dbReference type="ChEBI" id="CHEBI:178002"/>
    </ligand>
</feature>
<feature type="binding site" evidence="1">
    <location>
        <position position="611"/>
    </location>
    <ligand>
        <name>ATP</name>
        <dbReference type="ChEBI" id="CHEBI:30616"/>
    </ligand>
</feature>
<feature type="binding site" evidence="1">
    <location>
        <position position="906"/>
    </location>
    <ligand>
        <name>Zn(2+)</name>
        <dbReference type="ChEBI" id="CHEBI:29105"/>
    </ligand>
</feature>
<feature type="binding site" evidence="1">
    <location>
        <position position="909"/>
    </location>
    <ligand>
        <name>Zn(2+)</name>
        <dbReference type="ChEBI" id="CHEBI:29105"/>
    </ligand>
</feature>
<feature type="binding site" evidence="1">
    <location>
        <position position="926"/>
    </location>
    <ligand>
        <name>Zn(2+)</name>
        <dbReference type="ChEBI" id="CHEBI:29105"/>
    </ligand>
</feature>
<feature type="binding site" evidence="1">
    <location>
        <position position="929"/>
    </location>
    <ligand>
        <name>Zn(2+)</name>
        <dbReference type="ChEBI" id="CHEBI:29105"/>
    </ligand>
</feature>
<accession>Q48NK6</accession>
<reference key="1">
    <citation type="journal article" date="2005" name="J. Bacteriol.">
        <title>Whole-genome sequence analysis of Pseudomonas syringae pv. phaseolicola 1448A reveals divergence among pathovars in genes involved in virulence and transposition.</title>
        <authorList>
            <person name="Joardar V."/>
            <person name="Lindeberg M."/>
            <person name="Jackson R.W."/>
            <person name="Selengut J."/>
            <person name="Dodson R."/>
            <person name="Brinkac L.M."/>
            <person name="Daugherty S.C."/>
            <person name="DeBoy R.T."/>
            <person name="Durkin A.S."/>
            <person name="Gwinn Giglio M."/>
            <person name="Madupu R."/>
            <person name="Nelson W.C."/>
            <person name="Rosovitz M.J."/>
            <person name="Sullivan S.A."/>
            <person name="Crabtree J."/>
            <person name="Creasy T."/>
            <person name="Davidsen T.M."/>
            <person name="Haft D.H."/>
            <person name="Zafar N."/>
            <person name="Zhou L."/>
            <person name="Halpin R."/>
            <person name="Holley T."/>
            <person name="Khouri H.M."/>
            <person name="Feldblyum T.V."/>
            <person name="White O."/>
            <person name="Fraser C.M."/>
            <person name="Chatterjee A.K."/>
            <person name="Cartinhour S."/>
            <person name="Schneider D."/>
            <person name="Mansfield J.W."/>
            <person name="Collmer A."/>
            <person name="Buell R."/>
        </authorList>
    </citation>
    <scope>NUCLEOTIDE SEQUENCE [LARGE SCALE GENOMIC DNA]</scope>
    <source>
        <strain>1448A / Race 6</strain>
    </source>
</reference>
<keyword id="KW-0030">Aminoacyl-tRNA synthetase</keyword>
<keyword id="KW-0067">ATP-binding</keyword>
<keyword id="KW-0963">Cytoplasm</keyword>
<keyword id="KW-0436">Ligase</keyword>
<keyword id="KW-0479">Metal-binding</keyword>
<keyword id="KW-0547">Nucleotide-binding</keyword>
<keyword id="KW-0648">Protein biosynthesis</keyword>
<keyword id="KW-0862">Zinc</keyword>
<evidence type="ECO:0000255" key="1">
    <source>
        <dbReference type="HAMAP-Rule" id="MF_02002"/>
    </source>
</evidence>
<organism>
    <name type="scientific">Pseudomonas savastanoi pv. phaseolicola (strain 1448A / Race 6)</name>
    <name type="common">Pseudomonas syringae pv. phaseolicola (strain 1448A / Race 6)</name>
    <dbReference type="NCBI Taxonomy" id="264730"/>
    <lineage>
        <taxon>Bacteria</taxon>
        <taxon>Pseudomonadati</taxon>
        <taxon>Pseudomonadota</taxon>
        <taxon>Gammaproteobacteria</taxon>
        <taxon>Pseudomonadales</taxon>
        <taxon>Pseudomonadaceae</taxon>
        <taxon>Pseudomonas</taxon>
    </lineage>
</organism>